<feature type="chain" id="PRO_0000458013" description="Lauric acid 10-hydroxylase">
    <location>
        <begin position="1"/>
        <end position="573"/>
    </location>
</feature>
<feature type="transmembrane region" description="Helical" evidence="3">
    <location>
        <begin position="3"/>
        <end position="23"/>
    </location>
</feature>
<feature type="transmembrane region" description="Helical" evidence="3">
    <location>
        <begin position="298"/>
        <end position="318"/>
    </location>
</feature>
<feature type="binding site" description="axial binding residue" evidence="2">
    <location>
        <position position="516"/>
    </location>
    <ligand>
        <name>heme</name>
        <dbReference type="ChEBI" id="CHEBI:30413"/>
    </ligand>
    <ligandPart>
        <name>Fe</name>
        <dbReference type="ChEBI" id="CHEBI:18248"/>
    </ligandPart>
</feature>
<proteinExistence type="evidence at protein level"/>
<dbReference type="EC" id="1.14.14.-" evidence="4"/>
<dbReference type="EMBL" id="AB265193">
    <property type="protein sequence ID" value="BAE97672.1"/>
    <property type="molecule type" value="mRNA"/>
</dbReference>
<dbReference type="SMR" id="Q14T82"/>
<dbReference type="BioCyc" id="MetaCyc:MONOMER-15515"/>
<dbReference type="UniPathway" id="UPA00199"/>
<dbReference type="GO" id="GO:0005789">
    <property type="term" value="C:endoplasmic reticulum membrane"/>
    <property type="evidence" value="ECO:0007669"/>
    <property type="project" value="UniProtKB-SubCell"/>
</dbReference>
<dbReference type="GO" id="GO:0120250">
    <property type="term" value="F:fatty acid omega-hydroxylase activity"/>
    <property type="evidence" value="ECO:0000314"/>
    <property type="project" value="UniProtKB"/>
</dbReference>
<dbReference type="GO" id="GO:0020037">
    <property type="term" value="F:heme binding"/>
    <property type="evidence" value="ECO:0007669"/>
    <property type="project" value="InterPro"/>
</dbReference>
<dbReference type="GO" id="GO:0005506">
    <property type="term" value="F:iron ion binding"/>
    <property type="evidence" value="ECO:0007669"/>
    <property type="project" value="InterPro"/>
</dbReference>
<dbReference type="GO" id="GO:0120319">
    <property type="term" value="F:long-chain fatty acid omega-1 hydroxylase activity"/>
    <property type="evidence" value="ECO:0000314"/>
    <property type="project" value="UniProtKB"/>
</dbReference>
<dbReference type="GO" id="GO:0048252">
    <property type="term" value="P:lauric acid metabolic process"/>
    <property type="evidence" value="ECO:0000314"/>
    <property type="project" value="UniProtKB"/>
</dbReference>
<dbReference type="GO" id="GO:0097267">
    <property type="term" value="P:omega-hydroxylase P450 pathway"/>
    <property type="evidence" value="ECO:0000314"/>
    <property type="project" value="UniProtKB"/>
</dbReference>
<dbReference type="GO" id="GO:2000280">
    <property type="term" value="P:regulation of root development"/>
    <property type="evidence" value="ECO:0000314"/>
    <property type="project" value="UniProtKB"/>
</dbReference>
<dbReference type="Gene3D" id="1.10.630.10">
    <property type="entry name" value="Cytochrome P450"/>
    <property type="match status" value="2"/>
</dbReference>
<dbReference type="InterPro" id="IPR001128">
    <property type="entry name" value="Cyt_P450"/>
</dbReference>
<dbReference type="InterPro" id="IPR017972">
    <property type="entry name" value="Cyt_P450_CS"/>
</dbReference>
<dbReference type="InterPro" id="IPR002401">
    <property type="entry name" value="Cyt_P450_E_grp-I"/>
</dbReference>
<dbReference type="InterPro" id="IPR036396">
    <property type="entry name" value="Cyt_P450_sf"/>
</dbReference>
<dbReference type="PANTHER" id="PTHR47950">
    <property type="entry name" value="CYTOCHROME P450, FAMILY 76, SUBFAMILY C, POLYPEPTIDE 5-RELATED"/>
    <property type="match status" value="1"/>
</dbReference>
<dbReference type="PANTHER" id="PTHR47950:SF4">
    <property type="entry name" value="GERANIOL 8-HYDROXYLASE-LIKE"/>
    <property type="match status" value="1"/>
</dbReference>
<dbReference type="Pfam" id="PF00067">
    <property type="entry name" value="p450"/>
    <property type="match status" value="2"/>
</dbReference>
<dbReference type="PRINTS" id="PR00463">
    <property type="entry name" value="EP450I"/>
</dbReference>
<dbReference type="SUPFAM" id="SSF48264">
    <property type="entry name" value="Cytochrome P450"/>
    <property type="match status" value="2"/>
</dbReference>
<dbReference type="PROSITE" id="PS00086">
    <property type="entry name" value="CYTOCHROME_P450"/>
    <property type="match status" value="1"/>
</dbReference>
<evidence type="ECO:0000250" key="1">
    <source>
        <dbReference type="UniProtKB" id="Q8VWZ7"/>
    </source>
</evidence>
<evidence type="ECO:0000250" key="2">
    <source>
        <dbReference type="UniProtKB" id="Q96242"/>
    </source>
</evidence>
<evidence type="ECO:0000255" key="3"/>
<evidence type="ECO:0000269" key="4">
    <source>
    </source>
</evidence>
<evidence type="ECO:0000303" key="5">
    <source>
    </source>
</evidence>
<evidence type="ECO:0000305" key="6"/>
<accession>Q14T82</accession>
<keyword id="KW-0256">Endoplasmic reticulum</keyword>
<keyword id="KW-0349">Heme</keyword>
<keyword id="KW-0408">Iron</keyword>
<keyword id="KW-0443">Lipid metabolism</keyword>
<keyword id="KW-0472">Membrane</keyword>
<keyword id="KW-0479">Metal-binding</keyword>
<keyword id="KW-0503">Monooxygenase</keyword>
<keyword id="KW-0560">Oxidoreductase</keyword>
<keyword id="KW-0812">Transmembrane</keyword>
<keyword id="KW-1133">Transmembrane helix</keyword>
<protein>
    <recommendedName>
        <fullName>Lauric acid 10-hydroxylase</fullName>
        <ecNumber evidence="4">1.14.14.-</ecNumber>
    </recommendedName>
    <alternativeName>
        <fullName>Capric acid 12-hydroxylase</fullName>
        <ecNumber evidence="4">1.14.14.-</ecNumber>
    </alternativeName>
    <alternativeName>
        <fullName>Cytochrome P450 76B9</fullName>
    </alternativeName>
</protein>
<sequence>MDYVNILLGLFFTWFLVNGLMSLRRRKISKKLPPGPFPLPIIGNLHLLGNHPHKSLAQLAKIHGPIMNLKLGQLITVVISSSVVAREVLQKQDLTFSNRFVPDVVHVRNHSDFSFVWLPVNSRWRTLRKIMNSSIFSGNKLDGNQHLRSKKVQELIDYCQKCAKNGEAVDIGRATFGTTLNLLSNTIFSKDLTNPFSDSAKEFKELVWNIMVEAWKTQFGGLLSFPLRKFDPQGIKRRMTNYFTKFLGLISGLIDERLKERNLRDNANIDVLDALLNISKRTQKRLTGIKSSSCLVSLFPTPFLPFIIICPFLYLLIFHRCKVSDLNGEGSYVGGRVQLNHTPLQIGCDRLTVSNKPRNYGDSYSSFRTCLQGLILHLNTLEWANGRTTSRIHTLLAKKHKKTISQHICTSKKIKIKKLLEHFLSFGAIVKKNLPIPPGGFSSSLFHVKWRKTLSCLGYIIPKDSQVLVSVWAIGRNSDLWENPLVFKPERFWESEIDIRGRDFELIPFGAGRRICPGLPLAIRMIPVALGSLLNSFNWKLYGGIAPKDLDMEEKFGITLAKAQPLLAIPTPL</sequence>
<gene>
    <name evidence="5" type="primary">CYP76B9</name>
</gene>
<reference key="1">
    <citation type="journal article" date="2007" name="Biosci. Biotechnol. Biochem.">
        <title>Molecular cloning of CYP76B9, a cytochrome P450 from Petunia hybrida, catalyzing the omega-hydroxylation of capric acid and lauric acid.</title>
        <authorList>
            <person name="Imaishi H."/>
            <person name="Petkova-Andonova M."/>
        </authorList>
    </citation>
    <scope>NUCLEOTIDE SEQUENCE [MRNA]</scope>
    <scope>FUNCTION</scope>
    <scope>CATALYTIC ACTIVITY</scope>
    <scope>BIOPHYSICOCHEMICAL PROPERTIES</scope>
    <scope>TISSUE SPECIFICITY</scope>
    <scope>PATHWAY</scope>
</reference>
<name>C76B9_PETHY</name>
<comment type="function">
    <text evidence="4">Cytochrome P450 hydroxylase catalyzing the conversion of decanoate (capric acid) and dodecanoate (lauric acid) to their corresponding omega-hydroxy metabolites, 10-hydroxydecanoate and 12-hydroxydodecanoate, respectively; these hydroxylated components affect plant growth, including reducing root elongation.</text>
</comment>
<comment type="catalytic activity">
    <reaction evidence="4">
        <text>an omega-methyl-medium-chain fatty acid + reduced [NADPH--hemoprotein reductase] + O2 = an omega-hydroxy-medium-chain fatty acid + oxidized [NADPH--hemoprotein reductase] + H2O + H(+)</text>
        <dbReference type="Rhea" id="RHEA:75279"/>
        <dbReference type="Rhea" id="RHEA-COMP:11964"/>
        <dbReference type="Rhea" id="RHEA-COMP:11965"/>
        <dbReference type="ChEBI" id="CHEBI:15377"/>
        <dbReference type="ChEBI" id="CHEBI:15378"/>
        <dbReference type="ChEBI" id="CHEBI:15379"/>
        <dbReference type="ChEBI" id="CHEBI:57618"/>
        <dbReference type="ChEBI" id="CHEBI:58210"/>
        <dbReference type="ChEBI" id="CHEBI:194240"/>
        <dbReference type="ChEBI" id="CHEBI:194241"/>
    </reaction>
</comment>
<comment type="catalytic activity">
    <reaction evidence="4">
        <text>decanoate + reduced [NADPH--hemoprotein reductase] + O2 = 10-hydroxydecanoate + oxidized [NADPH--hemoprotein reductase] + H2O + H(+)</text>
        <dbReference type="Rhea" id="RHEA:75283"/>
        <dbReference type="Rhea" id="RHEA-COMP:11964"/>
        <dbReference type="Rhea" id="RHEA-COMP:11965"/>
        <dbReference type="ChEBI" id="CHEBI:11305"/>
        <dbReference type="ChEBI" id="CHEBI:15377"/>
        <dbReference type="ChEBI" id="CHEBI:15378"/>
        <dbReference type="ChEBI" id="CHEBI:15379"/>
        <dbReference type="ChEBI" id="CHEBI:27689"/>
        <dbReference type="ChEBI" id="CHEBI:57618"/>
        <dbReference type="ChEBI" id="CHEBI:58210"/>
    </reaction>
    <physiologicalReaction direction="left-to-right" evidence="4">
        <dbReference type="Rhea" id="RHEA:75284"/>
    </physiologicalReaction>
</comment>
<comment type="catalytic activity">
    <reaction evidence="4">
        <text>dodecanoate + reduced [NADPH--hemoprotein reductase] + O2 = 12-hydroxydodecanoate + oxidized [NADPH--hemoprotein reductase] + H2O + H(+)</text>
        <dbReference type="Rhea" id="RHEA:38947"/>
        <dbReference type="Rhea" id="RHEA-COMP:11964"/>
        <dbReference type="Rhea" id="RHEA-COMP:11965"/>
        <dbReference type="ChEBI" id="CHEBI:15377"/>
        <dbReference type="ChEBI" id="CHEBI:15378"/>
        <dbReference type="ChEBI" id="CHEBI:15379"/>
        <dbReference type="ChEBI" id="CHEBI:18262"/>
        <dbReference type="ChEBI" id="CHEBI:36204"/>
        <dbReference type="ChEBI" id="CHEBI:57618"/>
        <dbReference type="ChEBI" id="CHEBI:58210"/>
    </reaction>
    <physiologicalReaction direction="left-to-right" evidence="4">
        <dbReference type="Rhea" id="RHEA:38948"/>
    </physiologicalReaction>
</comment>
<comment type="cofactor">
    <cofactor evidence="2">
        <name>heme</name>
        <dbReference type="ChEBI" id="CHEBI:30413"/>
    </cofactor>
</comment>
<comment type="biophysicochemical properties">
    <kinetics>
        <KM evidence="4">9.4 uM for capric acid</KM>
        <KM evidence="4">5.7 uM for lauric acid</KM>
        <Vmax evidence="4">13.6 mmol/min/mol enzyme with capric acid as substrate</Vmax>
        <Vmax evidence="4">19.1 mmol/min/mol enzyme with lauric acid as substrate</Vmax>
    </kinetics>
</comment>
<comment type="pathway">
    <text evidence="4">Lipid metabolism; fatty acid metabolism.</text>
</comment>
<comment type="subcellular location">
    <subcellularLocation>
        <location evidence="1">Endoplasmic reticulum membrane</location>
        <topology evidence="3">Multi-pass membrane protein</topology>
    </subcellularLocation>
</comment>
<comment type="tissue specificity">
    <text evidence="4">Mostly expressed in flowers and leaves and, at low levels, in roots and stems.</text>
</comment>
<comment type="similarity">
    <text evidence="6">Belongs to the cytochrome P450 family.</text>
</comment>
<organism>
    <name type="scientific">Petunia hybrida</name>
    <name type="common">Petunia</name>
    <dbReference type="NCBI Taxonomy" id="4102"/>
    <lineage>
        <taxon>Eukaryota</taxon>
        <taxon>Viridiplantae</taxon>
        <taxon>Streptophyta</taxon>
        <taxon>Embryophyta</taxon>
        <taxon>Tracheophyta</taxon>
        <taxon>Spermatophyta</taxon>
        <taxon>Magnoliopsida</taxon>
        <taxon>eudicotyledons</taxon>
        <taxon>Gunneridae</taxon>
        <taxon>Pentapetalae</taxon>
        <taxon>asterids</taxon>
        <taxon>lamiids</taxon>
        <taxon>Solanales</taxon>
        <taxon>Solanaceae</taxon>
        <taxon>Petunioideae</taxon>
        <taxon>Petunia</taxon>
    </lineage>
</organism>